<sequence length="687" mass="74097">MGIDLNTVEEEAEEGAAAAVCGELWHACAGPGVALPRRGSALVYLPQAHLAADGGGGEVPPAGAAAVPPHVACRVVGVELRADAATDEVYARLALVAEGEMLQRNFREGGGEDGAGEMEGCDAEKKPRMPHMFCKTLTASDTSTHGGFSVPRRAAEDCFPPLDYKTVRPSQELIAVDLHGTQWKFRHIYRGQPRRHLLTIGWSSFVNRKKLVSGDAVLFLRGDDGQLRLGVRRAVQLRNEALFEPVNSSDSKLRILSSVASSLENKSVFHICFNPRSGASEFIVPYWRLLKSLNHPFSIGMRFRVCYESEDANERSAGLISGISEVDPIRWPGSRWKCLLVRWDDSTDSSHQNRVSPWEIERVGGSVSVTHSLSSGSKRTKLHFPQGSLDTPFLNGNGHPDSMGTENFHRVLQGQEFRGSRSHGVVCSESPGVPNFQSPDNRRFSADMRGYMMPASGPPQRNTEFTYQPIGFSESLGFPEVLQGQEMSQVVPLFRGATFGARTQNDRVVSANSVHRSAAQSGLLASTLGHPISQFTLSSSKVSSPSSVLMFNQATAPNHETVSGTNNKGMHVSQFASQEMLSETVTWPGTQRQTPSEITSNQFALARIPAPPSGAESGLPKRDAGRSSCRLFGFSLTGNMLGEDGEGLDDGAIEAGCENPPVLELFGHSHSTPGALHALCAAAPLGM</sequence>
<gene>
    <name type="primary">ARF14</name>
    <name type="ordered locus">Os05g0515400</name>
    <name type="ordered locus">LOC_Os05g43920</name>
    <name type="ORF">P0022D06.14</name>
</gene>
<proteinExistence type="evidence at transcript level"/>
<protein>
    <recommendedName>
        <fullName>Auxin response factor 14</fullName>
    </recommendedName>
</protein>
<keyword id="KW-0927">Auxin signaling pathway</keyword>
<keyword id="KW-0238">DNA-binding</keyword>
<keyword id="KW-0539">Nucleus</keyword>
<keyword id="KW-1185">Reference proteome</keyword>
<keyword id="KW-0804">Transcription</keyword>
<keyword id="KW-0805">Transcription regulation</keyword>
<comment type="function">
    <text>Auxin response factors (ARFs) are transcriptional factors that bind specifically to the DNA sequence 5'-TGTCTC-3' found in the auxin-responsive promoter elements (AuxREs).</text>
</comment>
<comment type="subunit">
    <text evidence="1">Homo and heterodimers.</text>
</comment>
<comment type="subcellular location">
    <subcellularLocation>
        <location evidence="2">Nucleus</location>
    </subcellularLocation>
</comment>
<comment type="tissue specificity">
    <text evidence="3">Expressed in roots, culms, leaves and young panicles.</text>
</comment>
<comment type="induction">
    <text evidence="3">Down-regulated by auxin under light condition.</text>
</comment>
<comment type="similarity">
    <text evidence="4">Belongs to the ARF family.</text>
</comment>
<comment type="sequence caution" evidence="4">
    <conflict type="erroneous gene model prediction">
        <sequence resource="EMBL-CDS" id="AAU03112"/>
    </conflict>
</comment>
<comment type="sequence caution" evidence="4">
    <conflict type="erroneous gene model prediction">
        <sequence resource="EMBL-CDS" id="BAF17952"/>
    </conflict>
</comment>
<evidence type="ECO:0000250" key="1"/>
<evidence type="ECO:0000255" key="2">
    <source>
        <dbReference type="PROSITE-ProRule" id="PRU00326"/>
    </source>
</evidence>
<evidence type="ECO:0000269" key="3">
    <source>
    </source>
</evidence>
<evidence type="ECO:0000305" key="4"/>
<accession>Q0DGS1</accession>
<accession>Q68Y40</accession>
<feature type="chain" id="PRO_0000299271" description="Auxin response factor 14">
    <location>
        <begin position="1"/>
        <end position="687"/>
    </location>
</feature>
<feature type="DNA-binding region" description="TF-B3" evidence="2">
    <location>
        <begin position="133"/>
        <end position="235"/>
    </location>
</feature>
<reference key="1">
    <citation type="journal article" date="2005" name="Mol. Genet. Genomics">
        <title>A fine physical map of the rice chromosome 5.</title>
        <authorList>
            <person name="Cheng C.-H."/>
            <person name="Chung M.C."/>
            <person name="Liu S.-M."/>
            <person name="Chen S.-K."/>
            <person name="Kao F.Y."/>
            <person name="Lin S.-J."/>
            <person name="Hsiao S.-H."/>
            <person name="Tseng I.C."/>
            <person name="Hsing Y.-I.C."/>
            <person name="Wu H.-P."/>
            <person name="Chen C.-S."/>
            <person name="Shaw J.-F."/>
            <person name="Wu J."/>
            <person name="Matsumoto T."/>
            <person name="Sasaki T."/>
            <person name="Chen H.-C."/>
            <person name="Chow T.-Y."/>
        </authorList>
    </citation>
    <scope>NUCLEOTIDE SEQUENCE [LARGE SCALE GENOMIC DNA]</scope>
    <source>
        <strain>cv. Nipponbare</strain>
    </source>
</reference>
<reference key="2">
    <citation type="journal article" date="2005" name="Nature">
        <title>The map-based sequence of the rice genome.</title>
        <authorList>
            <consortium name="International rice genome sequencing project (IRGSP)"/>
        </authorList>
    </citation>
    <scope>NUCLEOTIDE SEQUENCE [LARGE SCALE GENOMIC DNA]</scope>
    <source>
        <strain>cv. Nipponbare</strain>
    </source>
</reference>
<reference key="3">
    <citation type="journal article" date="2008" name="Nucleic Acids Res.">
        <title>The rice annotation project database (RAP-DB): 2008 update.</title>
        <authorList>
            <consortium name="The rice annotation project (RAP)"/>
        </authorList>
    </citation>
    <scope>GENOME REANNOTATION</scope>
    <source>
        <strain>cv. Nipponbare</strain>
    </source>
</reference>
<reference key="4">
    <citation type="journal article" date="2013" name="Rice">
        <title>Improvement of the Oryza sativa Nipponbare reference genome using next generation sequence and optical map data.</title>
        <authorList>
            <person name="Kawahara Y."/>
            <person name="de la Bastide M."/>
            <person name="Hamilton J.P."/>
            <person name="Kanamori H."/>
            <person name="McCombie W.R."/>
            <person name="Ouyang S."/>
            <person name="Schwartz D.C."/>
            <person name="Tanaka T."/>
            <person name="Wu J."/>
            <person name="Zhou S."/>
            <person name="Childs K.L."/>
            <person name="Davidson R.M."/>
            <person name="Lin H."/>
            <person name="Quesada-Ocampo L."/>
            <person name="Vaillancourt B."/>
            <person name="Sakai H."/>
            <person name="Lee S.S."/>
            <person name="Kim J."/>
            <person name="Numa H."/>
            <person name="Itoh T."/>
            <person name="Buell C.R."/>
            <person name="Matsumoto T."/>
        </authorList>
    </citation>
    <scope>GENOME REANNOTATION</scope>
    <source>
        <strain>cv. Nipponbare</strain>
    </source>
</reference>
<reference key="5">
    <citation type="journal article" date="2007" name="Gene">
        <title>Genome-wide analysis of the auxin response factors (ARF) gene family in rice (Oryza sativa).</title>
        <authorList>
            <person name="Wang D."/>
            <person name="Pei K."/>
            <person name="Fu Y."/>
            <person name="Sun Z."/>
            <person name="Li S."/>
            <person name="Liu H."/>
            <person name="Tang K."/>
            <person name="Han B."/>
            <person name="Tao Y."/>
        </authorList>
    </citation>
    <scope>GENE FAMILY</scope>
    <scope>TISSUE SPECIFICITY</scope>
    <scope>INDUCTION</scope>
    <scope>NOMENCLATURE</scope>
</reference>
<organism>
    <name type="scientific">Oryza sativa subsp. japonica</name>
    <name type="common">Rice</name>
    <dbReference type="NCBI Taxonomy" id="39947"/>
    <lineage>
        <taxon>Eukaryota</taxon>
        <taxon>Viridiplantae</taxon>
        <taxon>Streptophyta</taxon>
        <taxon>Embryophyta</taxon>
        <taxon>Tracheophyta</taxon>
        <taxon>Spermatophyta</taxon>
        <taxon>Magnoliopsida</taxon>
        <taxon>Liliopsida</taxon>
        <taxon>Poales</taxon>
        <taxon>Poaceae</taxon>
        <taxon>BOP clade</taxon>
        <taxon>Oryzoideae</taxon>
        <taxon>Oryzeae</taxon>
        <taxon>Oryzinae</taxon>
        <taxon>Oryza</taxon>
        <taxon>Oryza sativa</taxon>
    </lineage>
</organism>
<dbReference type="EMBL" id="AC132485">
    <property type="protein sequence ID" value="AAU03112.1"/>
    <property type="status" value="ALT_SEQ"/>
    <property type="molecule type" value="Genomic_DNA"/>
</dbReference>
<dbReference type="EMBL" id="AP008211">
    <property type="protein sequence ID" value="BAF17952.1"/>
    <property type="status" value="ALT_SEQ"/>
    <property type="molecule type" value="Genomic_DNA"/>
</dbReference>
<dbReference type="EMBL" id="AP014961">
    <property type="status" value="NOT_ANNOTATED_CDS"/>
    <property type="molecule type" value="Genomic_DNA"/>
</dbReference>
<dbReference type="RefSeq" id="XP_015637659.1">
    <property type="nucleotide sequence ID" value="XM_015782173.1"/>
</dbReference>
<dbReference type="SMR" id="Q0DGS1"/>
<dbReference type="FunCoup" id="Q0DGS1">
    <property type="interactions" value="18"/>
</dbReference>
<dbReference type="STRING" id="39947.Q0DGS1"/>
<dbReference type="PaxDb" id="39947-Q0DGS1"/>
<dbReference type="KEGG" id="dosa:Os05g0515400"/>
<dbReference type="eggNOG" id="ENOG502QQSY">
    <property type="taxonomic scope" value="Eukaryota"/>
</dbReference>
<dbReference type="HOGENOM" id="CLU_002626_2_2_1"/>
<dbReference type="InParanoid" id="Q0DGS1"/>
<dbReference type="OrthoDB" id="624437at2759"/>
<dbReference type="PlantReactome" id="R-OSA-5608118">
    <property type="pathway name" value="Auxin signalling"/>
</dbReference>
<dbReference type="Proteomes" id="UP000000763">
    <property type="component" value="Chromosome 5"/>
</dbReference>
<dbReference type="Proteomes" id="UP000059680">
    <property type="component" value="Chromosome 5"/>
</dbReference>
<dbReference type="GO" id="GO:0005634">
    <property type="term" value="C:nucleus"/>
    <property type="evidence" value="ECO:0007669"/>
    <property type="project" value="UniProtKB-SubCell"/>
</dbReference>
<dbReference type="GO" id="GO:0003677">
    <property type="term" value="F:DNA binding"/>
    <property type="evidence" value="ECO:0007669"/>
    <property type="project" value="UniProtKB-KW"/>
</dbReference>
<dbReference type="GO" id="GO:0009734">
    <property type="term" value="P:auxin-activated signaling pathway"/>
    <property type="evidence" value="ECO:0007669"/>
    <property type="project" value="UniProtKB-KW"/>
</dbReference>
<dbReference type="GO" id="GO:0006355">
    <property type="term" value="P:regulation of DNA-templated transcription"/>
    <property type="evidence" value="ECO:0007669"/>
    <property type="project" value="InterPro"/>
</dbReference>
<dbReference type="CDD" id="cd10017">
    <property type="entry name" value="B3_DNA"/>
    <property type="match status" value="1"/>
</dbReference>
<dbReference type="FunFam" id="2.30.30.1040:FF:000001">
    <property type="entry name" value="Auxin response factor"/>
    <property type="match status" value="1"/>
</dbReference>
<dbReference type="FunFam" id="2.40.330.10:FF:000001">
    <property type="entry name" value="Auxin response factor"/>
    <property type="match status" value="1"/>
</dbReference>
<dbReference type="Gene3D" id="2.30.30.1040">
    <property type="match status" value="1"/>
</dbReference>
<dbReference type="Gene3D" id="2.40.330.10">
    <property type="entry name" value="DNA-binding pseudobarrel domain"/>
    <property type="match status" value="1"/>
</dbReference>
<dbReference type="InterPro" id="IPR010525">
    <property type="entry name" value="ARF_dom"/>
</dbReference>
<dbReference type="InterPro" id="IPR044835">
    <property type="entry name" value="ARF_plant"/>
</dbReference>
<dbReference type="InterPro" id="IPR003340">
    <property type="entry name" value="B3_DNA-bd"/>
</dbReference>
<dbReference type="InterPro" id="IPR015300">
    <property type="entry name" value="DNA-bd_pseudobarrel_sf"/>
</dbReference>
<dbReference type="PANTHER" id="PTHR31384:SF23">
    <property type="entry name" value="AUXIN RESPONSE FACTOR 14"/>
    <property type="match status" value="1"/>
</dbReference>
<dbReference type="PANTHER" id="PTHR31384">
    <property type="entry name" value="AUXIN RESPONSE FACTOR 4-RELATED"/>
    <property type="match status" value="1"/>
</dbReference>
<dbReference type="Pfam" id="PF06507">
    <property type="entry name" value="ARF_AD"/>
    <property type="match status" value="1"/>
</dbReference>
<dbReference type="Pfam" id="PF02362">
    <property type="entry name" value="B3"/>
    <property type="match status" value="1"/>
</dbReference>
<dbReference type="SMART" id="SM01019">
    <property type="entry name" value="B3"/>
    <property type="match status" value="1"/>
</dbReference>
<dbReference type="SUPFAM" id="SSF101936">
    <property type="entry name" value="DNA-binding pseudobarrel domain"/>
    <property type="match status" value="1"/>
</dbReference>
<dbReference type="PROSITE" id="PS50863">
    <property type="entry name" value="B3"/>
    <property type="match status" value="1"/>
</dbReference>
<name>ARFN_ORYSJ</name>